<proteinExistence type="inferred from homology"/>
<organism>
    <name type="scientific">Streptococcus thermophilus (strain ATCC BAA-250 / LMG 18311)</name>
    <dbReference type="NCBI Taxonomy" id="264199"/>
    <lineage>
        <taxon>Bacteria</taxon>
        <taxon>Bacillati</taxon>
        <taxon>Bacillota</taxon>
        <taxon>Bacilli</taxon>
        <taxon>Lactobacillales</taxon>
        <taxon>Streptococcaceae</taxon>
        <taxon>Streptococcus</taxon>
    </lineage>
</organism>
<keyword id="KW-0064">Aspartyl protease</keyword>
<keyword id="KW-1003">Cell membrane</keyword>
<keyword id="KW-0378">Hydrolase</keyword>
<keyword id="KW-0472">Membrane</keyword>
<keyword id="KW-0645">Protease</keyword>
<keyword id="KW-1185">Reference proteome</keyword>
<keyword id="KW-0812">Transmembrane</keyword>
<keyword id="KW-1133">Transmembrane helix</keyword>
<evidence type="ECO:0000255" key="1">
    <source>
        <dbReference type="HAMAP-Rule" id="MF_00161"/>
    </source>
</evidence>
<sequence length="153" mass="17185">MRKVAIPVAILALIGLDQWVKHWVVANISLNQVIKAIPGVFSLTYLQNRGAAFSILQNQKYFFVILTVLVIGAALFYLVKNYQKSLWLVLSLILIISGGIGNFIDRVHLGYVVDMVQLDFIDFAIFNVADSYLTVGVLLLILILWKEENGSHH</sequence>
<gene>
    <name evidence="1" type="primary">lspA</name>
    <name type="ordered locus">stu0521</name>
</gene>
<accession>Q5M5G2</accession>
<dbReference type="EC" id="3.4.23.36" evidence="1"/>
<dbReference type="EMBL" id="CP000023">
    <property type="protein sequence ID" value="AAV60229.1"/>
    <property type="molecule type" value="Genomic_DNA"/>
</dbReference>
<dbReference type="RefSeq" id="WP_002946082.1">
    <property type="nucleotide sequence ID" value="NC_006448.1"/>
</dbReference>
<dbReference type="SMR" id="Q5M5G2"/>
<dbReference type="STRING" id="264199.stu0521"/>
<dbReference type="GeneID" id="66898424"/>
<dbReference type="KEGG" id="stl:stu0521"/>
<dbReference type="eggNOG" id="COG0597">
    <property type="taxonomic scope" value="Bacteria"/>
</dbReference>
<dbReference type="HOGENOM" id="CLU_083252_3_3_9"/>
<dbReference type="UniPathway" id="UPA00665"/>
<dbReference type="Proteomes" id="UP000001170">
    <property type="component" value="Chromosome"/>
</dbReference>
<dbReference type="GO" id="GO:0005886">
    <property type="term" value="C:plasma membrane"/>
    <property type="evidence" value="ECO:0007669"/>
    <property type="project" value="UniProtKB-SubCell"/>
</dbReference>
<dbReference type="GO" id="GO:0004190">
    <property type="term" value="F:aspartic-type endopeptidase activity"/>
    <property type="evidence" value="ECO:0007669"/>
    <property type="project" value="UniProtKB-UniRule"/>
</dbReference>
<dbReference type="GO" id="GO:0006508">
    <property type="term" value="P:proteolysis"/>
    <property type="evidence" value="ECO:0007669"/>
    <property type="project" value="UniProtKB-KW"/>
</dbReference>
<dbReference type="HAMAP" id="MF_00161">
    <property type="entry name" value="LspA"/>
    <property type="match status" value="1"/>
</dbReference>
<dbReference type="InterPro" id="IPR001872">
    <property type="entry name" value="Peptidase_A8"/>
</dbReference>
<dbReference type="NCBIfam" id="TIGR00077">
    <property type="entry name" value="lspA"/>
    <property type="match status" value="1"/>
</dbReference>
<dbReference type="PANTHER" id="PTHR33695">
    <property type="entry name" value="LIPOPROTEIN SIGNAL PEPTIDASE"/>
    <property type="match status" value="1"/>
</dbReference>
<dbReference type="PANTHER" id="PTHR33695:SF1">
    <property type="entry name" value="LIPOPROTEIN SIGNAL PEPTIDASE"/>
    <property type="match status" value="1"/>
</dbReference>
<dbReference type="Pfam" id="PF01252">
    <property type="entry name" value="Peptidase_A8"/>
    <property type="match status" value="1"/>
</dbReference>
<dbReference type="PRINTS" id="PR00781">
    <property type="entry name" value="LIPOSIGPTASE"/>
</dbReference>
<dbReference type="PROSITE" id="PS00855">
    <property type="entry name" value="SPASE_II"/>
    <property type="match status" value="1"/>
</dbReference>
<comment type="function">
    <text evidence="1">This protein specifically catalyzes the removal of signal peptides from prolipoproteins.</text>
</comment>
<comment type="catalytic activity">
    <reaction evidence="1">
        <text>Release of signal peptides from bacterial membrane prolipoproteins. Hydrolyzes -Xaa-Yaa-Zaa-|-(S,diacylglyceryl)Cys-, in which Xaa is hydrophobic (preferably Leu), and Yaa (Ala or Ser) and Zaa (Gly or Ala) have small, neutral side chains.</text>
        <dbReference type="EC" id="3.4.23.36"/>
    </reaction>
</comment>
<comment type="pathway">
    <text evidence="1">Protein modification; lipoprotein biosynthesis (signal peptide cleavage).</text>
</comment>
<comment type="subcellular location">
    <subcellularLocation>
        <location evidence="1">Cell membrane</location>
        <topology evidence="1">Multi-pass membrane protein</topology>
    </subcellularLocation>
</comment>
<comment type="similarity">
    <text evidence="1">Belongs to the peptidase A8 family.</text>
</comment>
<name>LSPA_STRT2</name>
<feature type="chain" id="PRO_0000289446" description="Lipoprotein signal peptidase">
    <location>
        <begin position="1"/>
        <end position="153"/>
    </location>
</feature>
<feature type="transmembrane region" description="Helical" evidence="1">
    <location>
        <begin position="61"/>
        <end position="81"/>
    </location>
</feature>
<feature type="transmembrane region" description="Helical" evidence="1">
    <location>
        <begin position="85"/>
        <end position="105"/>
    </location>
</feature>
<feature type="transmembrane region" description="Helical" evidence="1">
    <location>
        <begin position="125"/>
        <end position="145"/>
    </location>
</feature>
<feature type="active site" evidence="1">
    <location>
        <position position="114"/>
    </location>
</feature>
<feature type="active site" evidence="1">
    <location>
        <position position="130"/>
    </location>
</feature>
<protein>
    <recommendedName>
        <fullName evidence="1">Lipoprotein signal peptidase</fullName>
        <ecNumber evidence="1">3.4.23.36</ecNumber>
    </recommendedName>
    <alternativeName>
        <fullName evidence="1">Prolipoprotein signal peptidase</fullName>
    </alternativeName>
    <alternativeName>
        <fullName evidence="1">Signal peptidase II</fullName>
        <shortName evidence="1">SPase II</shortName>
    </alternativeName>
</protein>
<reference key="1">
    <citation type="journal article" date="2004" name="Nat. Biotechnol.">
        <title>Complete sequence and comparative genome analysis of the dairy bacterium Streptococcus thermophilus.</title>
        <authorList>
            <person name="Bolotin A."/>
            <person name="Quinquis B."/>
            <person name="Renault P."/>
            <person name="Sorokin A."/>
            <person name="Ehrlich S.D."/>
            <person name="Kulakauskas S."/>
            <person name="Lapidus A."/>
            <person name="Goltsman E."/>
            <person name="Mazur M."/>
            <person name="Pusch G.D."/>
            <person name="Fonstein M."/>
            <person name="Overbeek R."/>
            <person name="Kyprides N."/>
            <person name="Purnelle B."/>
            <person name="Prozzi D."/>
            <person name="Ngui K."/>
            <person name="Masuy D."/>
            <person name="Hancy F."/>
            <person name="Burteau S."/>
            <person name="Boutry M."/>
            <person name="Delcour J."/>
            <person name="Goffeau A."/>
            <person name="Hols P."/>
        </authorList>
    </citation>
    <scope>NUCLEOTIDE SEQUENCE [LARGE SCALE GENOMIC DNA]</scope>
    <source>
        <strain>ATCC BAA-250 / LMG 18311</strain>
    </source>
</reference>